<name>RUTB_SHISS</name>
<proteinExistence type="inferred from homology"/>
<evidence type="ECO:0000255" key="1">
    <source>
        <dbReference type="HAMAP-Rule" id="MF_00830"/>
    </source>
</evidence>
<protein>
    <recommendedName>
        <fullName evidence="1">Ureidoacrylate amidohydrolase RutB</fullName>
        <ecNumber evidence="1">3.5.1.110</ecNumber>
    </recommendedName>
</protein>
<keyword id="KW-0378">Hydrolase</keyword>
<keyword id="KW-1185">Reference proteome</keyword>
<sequence length="244" mass="26573">MPRPSPCADSGGGMMTTLTARPEAITFDPQQSALIVVDMQNAYATPGGYLDLAGFDVSTTRPVIANIQTAVTAARAAGMLIIWFQNGWDEQYVEAGGPGSPNFHKSNALKTMRKQPQLQGKLLAKGSWDYQLVDELVPQPGDIVLPKPRYSGFFNTPLDSILRSRGIRHLVFTGIATNVCVESTLRDGFFLEYFGVVLEDATHQAGPEFAQKAALFNIETFFGWVSDVETFCDALSPTSFARIA</sequence>
<feature type="chain" id="PRO_0000402705" description="Ureidoacrylate amidohydrolase RutB">
    <location>
        <begin position="1"/>
        <end position="244"/>
    </location>
</feature>
<feature type="active site" description="Proton acceptor" evidence="1">
    <location>
        <position position="38"/>
    </location>
</feature>
<feature type="active site" evidence="1">
    <location>
        <position position="147"/>
    </location>
</feature>
<feature type="active site" description="Nucleophile" evidence="1">
    <location>
        <position position="180"/>
    </location>
</feature>
<gene>
    <name evidence="1" type="primary">rutB</name>
    <name type="ordered locus">SSON_1030</name>
</gene>
<organism>
    <name type="scientific">Shigella sonnei (strain Ss046)</name>
    <dbReference type="NCBI Taxonomy" id="300269"/>
    <lineage>
        <taxon>Bacteria</taxon>
        <taxon>Pseudomonadati</taxon>
        <taxon>Pseudomonadota</taxon>
        <taxon>Gammaproteobacteria</taxon>
        <taxon>Enterobacterales</taxon>
        <taxon>Enterobacteriaceae</taxon>
        <taxon>Shigella</taxon>
    </lineage>
</organism>
<reference key="1">
    <citation type="journal article" date="2005" name="Nucleic Acids Res.">
        <title>Genome dynamics and diversity of Shigella species, the etiologic agents of bacillary dysentery.</title>
        <authorList>
            <person name="Yang F."/>
            <person name="Yang J."/>
            <person name="Zhang X."/>
            <person name="Chen L."/>
            <person name="Jiang Y."/>
            <person name="Yan Y."/>
            <person name="Tang X."/>
            <person name="Wang J."/>
            <person name="Xiong Z."/>
            <person name="Dong J."/>
            <person name="Xue Y."/>
            <person name="Zhu Y."/>
            <person name="Xu X."/>
            <person name="Sun L."/>
            <person name="Chen S."/>
            <person name="Nie H."/>
            <person name="Peng J."/>
            <person name="Xu J."/>
            <person name="Wang Y."/>
            <person name="Yuan Z."/>
            <person name="Wen Y."/>
            <person name="Yao Z."/>
            <person name="Shen Y."/>
            <person name="Qiang B."/>
            <person name="Hou Y."/>
            <person name="Yu J."/>
            <person name="Jin Q."/>
        </authorList>
    </citation>
    <scope>NUCLEOTIDE SEQUENCE [LARGE SCALE GENOMIC DNA]</scope>
    <source>
        <strain>Ss046</strain>
    </source>
</reference>
<accession>Q3Z3A3</accession>
<dbReference type="EC" id="3.5.1.110" evidence="1"/>
<dbReference type="EMBL" id="CP000038">
    <property type="protein sequence ID" value="AAZ87759.1"/>
    <property type="molecule type" value="Genomic_DNA"/>
</dbReference>
<dbReference type="SMR" id="Q3Z3A3"/>
<dbReference type="KEGG" id="ssn:SSON_1030"/>
<dbReference type="HOGENOM" id="CLU_068979_8_0_6"/>
<dbReference type="Proteomes" id="UP000002529">
    <property type="component" value="Chromosome"/>
</dbReference>
<dbReference type="GO" id="GO:0016811">
    <property type="term" value="F:hydrolase activity, acting on carbon-nitrogen (but not peptide) bonds, in linear amides"/>
    <property type="evidence" value="ECO:0007669"/>
    <property type="project" value="UniProtKB-UniRule"/>
</dbReference>
<dbReference type="GO" id="GO:0019740">
    <property type="term" value="P:nitrogen utilization"/>
    <property type="evidence" value="ECO:0007669"/>
    <property type="project" value="UniProtKB-UniRule"/>
</dbReference>
<dbReference type="GO" id="GO:0006212">
    <property type="term" value="P:uracil catabolic process"/>
    <property type="evidence" value="ECO:0007669"/>
    <property type="project" value="UniProtKB-UniRule"/>
</dbReference>
<dbReference type="CDD" id="cd00431">
    <property type="entry name" value="cysteine_hydrolases"/>
    <property type="match status" value="1"/>
</dbReference>
<dbReference type="FunFam" id="3.40.50.850:FF:000004">
    <property type="entry name" value="Peroxyureidoacrylate/ureidoacrylate amidohydrolase RutB"/>
    <property type="match status" value="1"/>
</dbReference>
<dbReference type="Gene3D" id="3.40.50.850">
    <property type="entry name" value="Isochorismatase-like"/>
    <property type="match status" value="1"/>
</dbReference>
<dbReference type="HAMAP" id="MF_00830">
    <property type="entry name" value="RutB"/>
    <property type="match status" value="1"/>
</dbReference>
<dbReference type="InterPro" id="IPR000868">
    <property type="entry name" value="Isochorismatase-like_dom"/>
</dbReference>
<dbReference type="InterPro" id="IPR050272">
    <property type="entry name" value="Isochorismatase-like_hydrls"/>
</dbReference>
<dbReference type="InterPro" id="IPR036380">
    <property type="entry name" value="Isochorismatase-like_sf"/>
</dbReference>
<dbReference type="InterPro" id="IPR019916">
    <property type="entry name" value="RutB"/>
</dbReference>
<dbReference type="NCBIfam" id="TIGR03614">
    <property type="entry name" value="RutB"/>
    <property type="match status" value="1"/>
</dbReference>
<dbReference type="PANTHER" id="PTHR43540:SF6">
    <property type="entry name" value="ISOCHORISMATASE-LIKE DOMAIN-CONTAINING PROTEIN"/>
    <property type="match status" value="1"/>
</dbReference>
<dbReference type="PANTHER" id="PTHR43540">
    <property type="entry name" value="PEROXYUREIDOACRYLATE/UREIDOACRYLATE AMIDOHYDROLASE-RELATED"/>
    <property type="match status" value="1"/>
</dbReference>
<dbReference type="Pfam" id="PF00857">
    <property type="entry name" value="Isochorismatase"/>
    <property type="match status" value="1"/>
</dbReference>
<dbReference type="SUPFAM" id="SSF52499">
    <property type="entry name" value="Isochorismatase-like hydrolases"/>
    <property type="match status" value="1"/>
</dbReference>
<comment type="function">
    <text evidence="1">Hydrolyzes ureidoacrylate to form aminoacrylate and carbamate. The carbamate hydrolyzes spontaneously, thereby releasing one of the nitrogen atoms of the pyrimidine ring as ammonia and one of its carbon atoms as CO2.</text>
</comment>
<comment type="catalytic activity">
    <reaction evidence="1">
        <text>(Z)-3-ureidoacrylate + H2O + H(+) = (Z)-3-aminoacrylate + NH4(+) + CO2</text>
        <dbReference type="Rhea" id="RHEA:42624"/>
        <dbReference type="ChEBI" id="CHEBI:15377"/>
        <dbReference type="ChEBI" id="CHEBI:15378"/>
        <dbReference type="ChEBI" id="CHEBI:16526"/>
        <dbReference type="ChEBI" id="CHEBI:28938"/>
        <dbReference type="ChEBI" id="CHEBI:59891"/>
        <dbReference type="ChEBI" id="CHEBI:59894"/>
        <dbReference type="EC" id="3.5.1.110"/>
    </reaction>
</comment>
<comment type="catalytic activity">
    <reaction evidence="1">
        <text>(Z)-3-ureidoacrylate + H2O = (Z)-3-aminoacrylate + carbamate + H(+)</text>
        <dbReference type="Rhea" id="RHEA:31603"/>
        <dbReference type="ChEBI" id="CHEBI:13941"/>
        <dbReference type="ChEBI" id="CHEBI:15377"/>
        <dbReference type="ChEBI" id="CHEBI:15378"/>
        <dbReference type="ChEBI" id="CHEBI:59891"/>
        <dbReference type="ChEBI" id="CHEBI:59894"/>
    </reaction>
</comment>
<comment type="catalytic activity">
    <reaction evidence="1">
        <text>(Z)-2-methylureidoacrylate + H2O + H(+) = (Z)-2-methylaminoacrylate + NH4(+) + CO2</text>
        <dbReference type="Rhea" id="RHEA:42620"/>
        <dbReference type="ChEBI" id="CHEBI:15377"/>
        <dbReference type="ChEBI" id="CHEBI:15378"/>
        <dbReference type="ChEBI" id="CHEBI:16526"/>
        <dbReference type="ChEBI" id="CHEBI:28938"/>
        <dbReference type="ChEBI" id="CHEBI:143783"/>
        <dbReference type="ChEBI" id="CHEBI:145735"/>
        <dbReference type="EC" id="3.5.1.110"/>
    </reaction>
</comment>
<comment type="induction">
    <text evidence="1">Up-regulated by the nitrogen regulatory protein C (NtrC also called GlnG) and repressed by RutR.</text>
</comment>
<comment type="similarity">
    <text evidence="1">Belongs to the isochorismatase family. RutB subfamily.</text>
</comment>